<evidence type="ECO:0000255" key="1">
    <source>
        <dbReference type="HAMAP-Rule" id="MF_00634"/>
    </source>
</evidence>
<proteinExistence type="inferred from homology"/>
<keyword id="KW-1185">Reference proteome</keyword>
<organism>
    <name type="scientific">Salmonella arizonae (strain ATCC BAA-731 / CDC346-86 / RSK2980)</name>
    <dbReference type="NCBI Taxonomy" id="41514"/>
    <lineage>
        <taxon>Bacteria</taxon>
        <taxon>Pseudomonadati</taxon>
        <taxon>Pseudomonadota</taxon>
        <taxon>Gammaproteobacteria</taxon>
        <taxon>Enterobacterales</taxon>
        <taxon>Enterobacteriaceae</taxon>
        <taxon>Salmonella</taxon>
    </lineage>
</organism>
<name>YGGU_SALAR</name>
<dbReference type="EMBL" id="CP000880">
    <property type="protein sequence ID" value="ABX24316.1"/>
    <property type="molecule type" value="Genomic_DNA"/>
</dbReference>
<dbReference type="SMR" id="A9MQS2"/>
<dbReference type="STRING" id="41514.SARI_04543"/>
<dbReference type="KEGG" id="ses:SARI_04543"/>
<dbReference type="HOGENOM" id="CLU_130694_5_0_6"/>
<dbReference type="Proteomes" id="UP000002084">
    <property type="component" value="Chromosome"/>
</dbReference>
<dbReference type="GO" id="GO:0005737">
    <property type="term" value="C:cytoplasm"/>
    <property type="evidence" value="ECO:0007669"/>
    <property type="project" value="TreeGrafter"/>
</dbReference>
<dbReference type="Gene3D" id="3.30.1200.10">
    <property type="entry name" value="YggU-like"/>
    <property type="match status" value="1"/>
</dbReference>
<dbReference type="HAMAP" id="MF_00634">
    <property type="entry name" value="UPF0235"/>
    <property type="match status" value="1"/>
</dbReference>
<dbReference type="InterPro" id="IPR003746">
    <property type="entry name" value="DUF167"/>
</dbReference>
<dbReference type="InterPro" id="IPR036591">
    <property type="entry name" value="YggU-like_sf"/>
</dbReference>
<dbReference type="NCBIfam" id="TIGR00251">
    <property type="entry name" value="DUF167 family protein"/>
    <property type="match status" value="1"/>
</dbReference>
<dbReference type="NCBIfam" id="NF003466">
    <property type="entry name" value="PRK05090.1"/>
    <property type="match status" value="1"/>
</dbReference>
<dbReference type="PANTHER" id="PTHR13420">
    <property type="entry name" value="UPF0235 PROTEIN C15ORF40"/>
    <property type="match status" value="1"/>
</dbReference>
<dbReference type="PANTHER" id="PTHR13420:SF7">
    <property type="entry name" value="UPF0235 PROTEIN C15ORF40"/>
    <property type="match status" value="1"/>
</dbReference>
<dbReference type="Pfam" id="PF02594">
    <property type="entry name" value="DUF167"/>
    <property type="match status" value="1"/>
</dbReference>
<dbReference type="SMART" id="SM01152">
    <property type="entry name" value="DUF167"/>
    <property type="match status" value="1"/>
</dbReference>
<dbReference type="SUPFAM" id="SSF69786">
    <property type="entry name" value="YggU-like"/>
    <property type="match status" value="1"/>
</dbReference>
<feature type="chain" id="PRO_1000082647" description="UPF0235 protein YggU">
    <location>
        <begin position="1"/>
        <end position="96"/>
    </location>
</feature>
<comment type="similarity">
    <text evidence="1">Belongs to the UPF0235 family.</text>
</comment>
<protein>
    <recommendedName>
        <fullName evidence="1">UPF0235 protein YggU</fullName>
    </recommendedName>
</protein>
<gene>
    <name evidence="1" type="primary">yggU</name>
    <name type="ordered locus">SARI_04543</name>
</gene>
<sequence length="96" mass="10489">MSAVTRCEDGLVLRLYIQPKASRDCIVGLHGDEVKVAITAPPVDGQANSHLVKFLGKQFRVAKSQVAIEKGELGRHKQVKIIHPQQIPPEIAALTE</sequence>
<reference key="1">
    <citation type="submission" date="2007-11" db="EMBL/GenBank/DDBJ databases">
        <authorList>
            <consortium name="The Salmonella enterica serovar Arizonae Genome Sequencing Project"/>
            <person name="McClelland M."/>
            <person name="Sanderson E.K."/>
            <person name="Porwollik S."/>
            <person name="Spieth J."/>
            <person name="Clifton W.S."/>
            <person name="Fulton R."/>
            <person name="Chunyan W."/>
            <person name="Wollam A."/>
            <person name="Shah N."/>
            <person name="Pepin K."/>
            <person name="Bhonagiri V."/>
            <person name="Nash W."/>
            <person name="Johnson M."/>
            <person name="Thiruvilangam P."/>
            <person name="Wilson R."/>
        </authorList>
    </citation>
    <scope>NUCLEOTIDE SEQUENCE [LARGE SCALE GENOMIC DNA]</scope>
    <source>
        <strain>ATCC BAA-731 / CDC346-86 / RSK2980</strain>
    </source>
</reference>
<accession>A9MQS2</accession>